<name>BIR2_CAEEL</name>
<sequence length="308" mass="35437">MPYTFENSEALLKNLKDAAPYISAAERFASFKGFVYDKRINIACTSEKLARAGFYSTASPEFPASAKCPFCMLEINFEQCDDPWEKHKSGSPHCEFVMIGEIEESELSFRIISNLAIRHATVRLYEELLGIVATLENGDIANENPITRADATRKLISFRSSSKLLTFDHRLATFQNFIFDKKRNVKCTSKKLAKAGWFSIANKKDKTSAKCPFCLVELDFDESDDPWEEHQKFSASCDFIKLGKLDEKKWTENEALMLGARITIMQKYEKGSWLIDELEKENRIDEIIKIRKIMIKPNHVLKRRRCSI</sequence>
<evidence type="ECO:0000255" key="1">
    <source>
        <dbReference type="PROSITE-ProRule" id="PRU00029"/>
    </source>
</evidence>
<evidence type="ECO:0000269" key="2">
    <source>
    </source>
</evidence>
<evidence type="ECO:0000305" key="3"/>
<evidence type="ECO:0000312" key="4">
    <source>
        <dbReference type="EMBL" id="AAD00182.1"/>
    </source>
</evidence>
<evidence type="ECO:0000312" key="5">
    <source>
        <dbReference type="Proteomes" id="UP000001940"/>
    </source>
</evidence>
<evidence type="ECO:0000312" key="6">
    <source>
        <dbReference type="WormBase" id="C50B8.2"/>
    </source>
</evidence>
<gene>
    <name evidence="6" type="primary">bir-2</name>
    <name evidence="6" type="ORF">C50B8.2</name>
</gene>
<proteinExistence type="evidence at transcript level"/>
<organism evidence="5">
    <name type="scientific">Caenorhabditis elegans</name>
    <dbReference type="NCBI Taxonomy" id="6239"/>
    <lineage>
        <taxon>Eukaryota</taxon>
        <taxon>Metazoa</taxon>
        <taxon>Ecdysozoa</taxon>
        <taxon>Nematoda</taxon>
        <taxon>Chromadorea</taxon>
        <taxon>Rhabditida</taxon>
        <taxon>Rhabditina</taxon>
        <taxon>Rhabditomorpha</taxon>
        <taxon>Rhabditoidea</taxon>
        <taxon>Rhabditidae</taxon>
        <taxon>Peloderinae</taxon>
        <taxon>Caenorhabditis</taxon>
    </lineage>
</organism>
<comment type="developmental stage">
    <text evidence="2">Expressed in embryos and in adult animals.</text>
</comment>
<comment type="similarity">
    <text evidence="3">Belongs to the IAP family.</text>
</comment>
<protein>
    <recommendedName>
        <fullName evidence="3">Baculoviral IAP repeat-containing protein bir-2</fullName>
    </recommendedName>
</protein>
<accession>G5ECJ5</accession>
<feature type="chain" id="PRO_0000441161" description="Baculoviral IAP repeat-containing protein bir-2">
    <location>
        <begin position="1"/>
        <end position="308"/>
    </location>
</feature>
<feature type="repeat" description="BIR 1" evidence="1">
    <location>
        <begin position="27"/>
        <end position="98"/>
    </location>
</feature>
<feature type="repeat" description="BIR 2" evidence="1">
    <location>
        <begin position="170"/>
        <end position="241"/>
    </location>
</feature>
<feature type="binding site" evidence="1">
    <location>
        <position position="68"/>
    </location>
    <ligand>
        <name>Zn(2+)</name>
        <dbReference type="ChEBI" id="CHEBI:29105"/>
    </ligand>
</feature>
<feature type="binding site" evidence="1">
    <location>
        <position position="71"/>
    </location>
    <ligand>
        <name>Zn(2+)</name>
        <dbReference type="ChEBI" id="CHEBI:29105"/>
    </ligand>
</feature>
<feature type="binding site" evidence="1">
    <location>
        <position position="87"/>
    </location>
    <ligand>
        <name>Zn(2+)</name>
        <dbReference type="ChEBI" id="CHEBI:29105"/>
    </ligand>
</feature>
<feature type="binding site" evidence="1">
    <location>
        <position position="94"/>
    </location>
    <ligand>
        <name>Zn(2+)</name>
        <dbReference type="ChEBI" id="CHEBI:29105"/>
    </ligand>
</feature>
<feature type="binding site" evidence="1">
    <location>
        <position position="211"/>
    </location>
    <ligand>
        <name>Zn(2+)</name>
        <dbReference type="ChEBI" id="CHEBI:29105"/>
    </ligand>
</feature>
<feature type="binding site" evidence="1">
    <location>
        <position position="214"/>
    </location>
    <ligand>
        <name>Zn(2+)</name>
        <dbReference type="ChEBI" id="CHEBI:29105"/>
    </ligand>
</feature>
<feature type="binding site" evidence="1">
    <location>
        <position position="230"/>
    </location>
    <ligand>
        <name>Zn(2+)</name>
        <dbReference type="ChEBI" id="CHEBI:29105"/>
    </ligand>
</feature>
<feature type="binding site" evidence="1">
    <location>
        <position position="237"/>
    </location>
    <ligand>
        <name>Zn(2+)</name>
        <dbReference type="ChEBI" id="CHEBI:29105"/>
    </ligand>
</feature>
<keyword id="KW-0479">Metal-binding</keyword>
<keyword id="KW-1185">Reference proteome</keyword>
<keyword id="KW-0677">Repeat</keyword>
<keyword id="KW-0862">Zinc</keyword>
<dbReference type="EMBL" id="U72208">
    <property type="protein sequence ID" value="AAD00182.1"/>
    <property type="molecule type" value="mRNA"/>
</dbReference>
<dbReference type="EMBL" id="BX284605">
    <property type="protein sequence ID" value="CAB01130.1"/>
    <property type="molecule type" value="Genomic_DNA"/>
</dbReference>
<dbReference type="PIR" id="T37474">
    <property type="entry name" value="T37474"/>
</dbReference>
<dbReference type="RefSeq" id="NP_506362.1">
    <property type="nucleotide sequence ID" value="NM_073961.6"/>
</dbReference>
<dbReference type="SMR" id="G5ECJ5"/>
<dbReference type="FunCoup" id="G5ECJ5">
    <property type="interactions" value="824"/>
</dbReference>
<dbReference type="STRING" id="6239.C50B8.2.1"/>
<dbReference type="PaxDb" id="6239-C50B8.2"/>
<dbReference type="PeptideAtlas" id="G5ECJ5"/>
<dbReference type="EnsemblMetazoa" id="C50B8.2.1">
    <property type="protein sequence ID" value="C50B8.2.1"/>
    <property type="gene ID" value="WBGene00000250"/>
</dbReference>
<dbReference type="GeneID" id="179841"/>
<dbReference type="KEGG" id="cel:CELE_C50B8.2"/>
<dbReference type="AGR" id="WB:WBGene00000250"/>
<dbReference type="CTD" id="179841"/>
<dbReference type="WormBase" id="C50B8.2">
    <property type="protein sequence ID" value="CE08882"/>
    <property type="gene ID" value="WBGene00000250"/>
    <property type="gene designation" value="bir-2"/>
</dbReference>
<dbReference type="eggNOG" id="KOG1101">
    <property type="taxonomic scope" value="Eukaryota"/>
</dbReference>
<dbReference type="GeneTree" id="ENSGT00940000169803"/>
<dbReference type="HOGENOM" id="CLU_850571_0_0_1"/>
<dbReference type="InParanoid" id="G5ECJ5"/>
<dbReference type="OMA" id="KAGWCSA"/>
<dbReference type="OrthoDB" id="2196114at2759"/>
<dbReference type="PhylomeDB" id="G5ECJ5"/>
<dbReference type="PRO" id="PR:G5ECJ5"/>
<dbReference type="Proteomes" id="UP000001940">
    <property type="component" value="Chromosome V"/>
</dbReference>
<dbReference type="Bgee" id="WBGene00000250">
    <property type="expression patterns" value="Expressed in germ line (C elegans) and 4 other cell types or tissues"/>
</dbReference>
<dbReference type="GO" id="GO:0032133">
    <property type="term" value="C:chromosome passenger complex"/>
    <property type="evidence" value="ECO:0000318"/>
    <property type="project" value="GO_Central"/>
</dbReference>
<dbReference type="GO" id="GO:0005737">
    <property type="term" value="C:cytoplasm"/>
    <property type="evidence" value="ECO:0000318"/>
    <property type="project" value="GO_Central"/>
</dbReference>
<dbReference type="GO" id="GO:0000776">
    <property type="term" value="C:kinetochore"/>
    <property type="evidence" value="ECO:0000318"/>
    <property type="project" value="GO_Central"/>
</dbReference>
<dbReference type="GO" id="GO:0051233">
    <property type="term" value="C:spindle midzone"/>
    <property type="evidence" value="ECO:0000318"/>
    <property type="project" value="GO_Central"/>
</dbReference>
<dbReference type="GO" id="GO:0046872">
    <property type="term" value="F:metal ion binding"/>
    <property type="evidence" value="ECO:0007669"/>
    <property type="project" value="UniProtKB-KW"/>
</dbReference>
<dbReference type="GO" id="GO:0007059">
    <property type="term" value="P:chromosome segregation"/>
    <property type="evidence" value="ECO:0000318"/>
    <property type="project" value="GO_Central"/>
</dbReference>
<dbReference type="GO" id="GO:0036093">
    <property type="term" value="P:germ cell proliferation"/>
    <property type="evidence" value="ECO:0000315"/>
    <property type="project" value="WormBase"/>
</dbReference>
<dbReference type="GO" id="GO:0000281">
    <property type="term" value="P:mitotic cytokinesis"/>
    <property type="evidence" value="ECO:0000318"/>
    <property type="project" value="GO_Central"/>
</dbReference>
<dbReference type="GO" id="GO:0007052">
    <property type="term" value="P:mitotic spindle organization"/>
    <property type="evidence" value="ECO:0000318"/>
    <property type="project" value="GO_Central"/>
</dbReference>
<dbReference type="GO" id="GO:0043066">
    <property type="term" value="P:negative regulation of apoptotic process"/>
    <property type="evidence" value="ECO:0000318"/>
    <property type="project" value="GO_Central"/>
</dbReference>
<dbReference type="CDD" id="cd00022">
    <property type="entry name" value="BIR"/>
    <property type="match status" value="2"/>
</dbReference>
<dbReference type="Gene3D" id="1.10.1170.10">
    <property type="entry name" value="Inhibitor Of Apoptosis Protein (2mihbC-IAP-1), Chain A"/>
    <property type="match status" value="2"/>
</dbReference>
<dbReference type="InterPro" id="IPR051190">
    <property type="entry name" value="Baculoviral_IAP"/>
</dbReference>
<dbReference type="InterPro" id="IPR001370">
    <property type="entry name" value="BIR_rpt"/>
</dbReference>
<dbReference type="PANTHER" id="PTHR46771">
    <property type="entry name" value="DETERIN"/>
    <property type="match status" value="1"/>
</dbReference>
<dbReference type="PANTHER" id="PTHR46771:SF5">
    <property type="entry name" value="DETERIN"/>
    <property type="match status" value="1"/>
</dbReference>
<dbReference type="Pfam" id="PF00653">
    <property type="entry name" value="BIR"/>
    <property type="match status" value="2"/>
</dbReference>
<dbReference type="SMART" id="SM00238">
    <property type="entry name" value="BIR"/>
    <property type="match status" value="2"/>
</dbReference>
<dbReference type="SUPFAM" id="SSF57924">
    <property type="entry name" value="Inhibitor of apoptosis (IAP) repeat"/>
    <property type="match status" value="2"/>
</dbReference>
<dbReference type="PROSITE" id="PS50143">
    <property type="entry name" value="BIR_REPEAT_2"/>
    <property type="match status" value="2"/>
</dbReference>
<reference evidence="4" key="1">
    <citation type="submission" date="1996-09" db="EMBL/GenBank/DDBJ databases">
        <authorList>
            <person name="Uren A.G."/>
        </authorList>
    </citation>
    <scope>NUCLEOTIDE SEQUENCE [MRNA]</scope>
</reference>
<reference evidence="5" key="2">
    <citation type="journal article" date="1998" name="Science">
        <title>Genome sequence of the nematode C. elegans: a platform for investigating biology.</title>
        <authorList>
            <consortium name="The C. elegans sequencing consortium"/>
        </authorList>
    </citation>
    <scope>NUCLEOTIDE SEQUENCE [LARGE SCALE GENOMIC DNA]</scope>
    <source>
        <strain evidence="5">Bristol N2</strain>
    </source>
</reference>
<reference evidence="3" key="3">
    <citation type="journal article" date="1999" name="Curr. Biol.">
        <title>Caenorhabditis elegans inhibitor of apoptosis protein (IAP) homologue BIR-1 plays a conserved role in cytokinesis.</title>
        <authorList>
            <person name="Fraser A.G."/>
            <person name="James C."/>
            <person name="Evan G.I."/>
            <person name="Hengartner M.O."/>
        </authorList>
    </citation>
    <scope>DEVELOPMENTAL STAGE</scope>
</reference>